<feature type="chain" id="PRO_0000117208" description="tRNA uridine 5-carboxymethylaminomethyl modification enzyme MnmG">
    <location>
        <begin position="1"/>
        <end position="631"/>
    </location>
</feature>
<feature type="binding site" evidence="1">
    <location>
        <begin position="13"/>
        <end position="18"/>
    </location>
    <ligand>
        <name>FAD</name>
        <dbReference type="ChEBI" id="CHEBI:57692"/>
    </ligand>
</feature>
<feature type="binding site" evidence="1">
    <location>
        <position position="125"/>
    </location>
    <ligand>
        <name>FAD</name>
        <dbReference type="ChEBI" id="CHEBI:57692"/>
    </ligand>
</feature>
<feature type="binding site" evidence="1">
    <location>
        <position position="180"/>
    </location>
    <ligand>
        <name>FAD</name>
        <dbReference type="ChEBI" id="CHEBI:57692"/>
    </ligand>
</feature>
<feature type="binding site" evidence="1">
    <location>
        <begin position="273"/>
        <end position="287"/>
    </location>
    <ligand>
        <name>NAD(+)</name>
        <dbReference type="ChEBI" id="CHEBI:57540"/>
    </ligand>
</feature>
<feature type="binding site" evidence="1">
    <location>
        <position position="370"/>
    </location>
    <ligand>
        <name>FAD</name>
        <dbReference type="ChEBI" id="CHEBI:57692"/>
    </ligand>
</feature>
<dbReference type="EMBL" id="AE003852">
    <property type="protein sequence ID" value="AAF95914.1"/>
    <property type="molecule type" value="Genomic_DNA"/>
</dbReference>
<dbReference type="PIR" id="G82035">
    <property type="entry name" value="G82035"/>
</dbReference>
<dbReference type="RefSeq" id="NP_232401.1">
    <property type="nucleotide sequence ID" value="NC_002505.1"/>
</dbReference>
<dbReference type="RefSeq" id="WP_000965608.1">
    <property type="nucleotide sequence ID" value="NZ_LT906614.1"/>
</dbReference>
<dbReference type="SMR" id="Q9KNG4"/>
<dbReference type="STRING" id="243277.VC_2775"/>
<dbReference type="DNASU" id="2614952"/>
<dbReference type="EnsemblBacteria" id="AAF95914">
    <property type="protein sequence ID" value="AAF95914"/>
    <property type="gene ID" value="VC_2775"/>
</dbReference>
<dbReference type="KEGG" id="vch:VC_2775"/>
<dbReference type="PATRIC" id="fig|243277.26.peg.2650"/>
<dbReference type="eggNOG" id="COG0445">
    <property type="taxonomic scope" value="Bacteria"/>
</dbReference>
<dbReference type="HOGENOM" id="CLU_007831_2_2_6"/>
<dbReference type="Proteomes" id="UP000000584">
    <property type="component" value="Chromosome 1"/>
</dbReference>
<dbReference type="GO" id="GO:0005829">
    <property type="term" value="C:cytosol"/>
    <property type="evidence" value="ECO:0000318"/>
    <property type="project" value="GO_Central"/>
</dbReference>
<dbReference type="GO" id="GO:0050660">
    <property type="term" value="F:flavin adenine dinucleotide binding"/>
    <property type="evidence" value="ECO:0000318"/>
    <property type="project" value="GO_Central"/>
</dbReference>
<dbReference type="GO" id="GO:0030488">
    <property type="term" value="P:tRNA methylation"/>
    <property type="evidence" value="ECO:0000318"/>
    <property type="project" value="GO_Central"/>
</dbReference>
<dbReference type="GO" id="GO:0002098">
    <property type="term" value="P:tRNA wobble uridine modification"/>
    <property type="evidence" value="ECO:0000318"/>
    <property type="project" value="GO_Central"/>
</dbReference>
<dbReference type="FunFam" id="1.10.10.1800:FF:000001">
    <property type="entry name" value="tRNA uridine 5-carboxymethylaminomethyl modification enzyme MnmG"/>
    <property type="match status" value="1"/>
</dbReference>
<dbReference type="FunFam" id="1.10.150.570:FF:000001">
    <property type="entry name" value="tRNA uridine 5-carboxymethylaminomethyl modification enzyme MnmG"/>
    <property type="match status" value="1"/>
</dbReference>
<dbReference type="FunFam" id="3.50.50.60:FF:000002">
    <property type="entry name" value="tRNA uridine 5-carboxymethylaminomethyl modification enzyme MnmG"/>
    <property type="match status" value="1"/>
</dbReference>
<dbReference type="FunFam" id="3.50.50.60:FF:000010">
    <property type="entry name" value="tRNA uridine 5-carboxymethylaminomethyl modification enzyme MnmG"/>
    <property type="match status" value="1"/>
</dbReference>
<dbReference type="Gene3D" id="3.50.50.60">
    <property type="entry name" value="FAD/NAD(P)-binding domain"/>
    <property type="match status" value="2"/>
</dbReference>
<dbReference type="Gene3D" id="1.10.150.570">
    <property type="entry name" value="GidA associated domain, C-terminal subdomain"/>
    <property type="match status" value="1"/>
</dbReference>
<dbReference type="Gene3D" id="1.10.10.1800">
    <property type="entry name" value="tRNA uridine 5-carboxymethylaminomethyl modification enzyme MnmG/GidA"/>
    <property type="match status" value="1"/>
</dbReference>
<dbReference type="HAMAP" id="MF_00129">
    <property type="entry name" value="MnmG_GidA"/>
    <property type="match status" value="1"/>
</dbReference>
<dbReference type="InterPro" id="IPR036188">
    <property type="entry name" value="FAD/NAD-bd_sf"/>
</dbReference>
<dbReference type="InterPro" id="IPR049312">
    <property type="entry name" value="GIDA_C_N"/>
</dbReference>
<dbReference type="InterPro" id="IPR004416">
    <property type="entry name" value="MnmG"/>
</dbReference>
<dbReference type="InterPro" id="IPR002218">
    <property type="entry name" value="MnmG-rel"/>
</dbReference>
<dbReference type="InterPro" id="IPR020595">
    <property type="entry name" value="MnmG-rel_CS"/>
</dbReference>
<dbReference type="InterPro" id="IPR026904">
    <property type="entry name" value="MnmG_C"/>
</dbReference>
<dbReference type="InterPro" id="IPR047001">
    <property type="entry name" value="MnmG_C_subdom"/>
</dbReference>
<dbReference type="InterPro" id="IPR044920">
    <property type="entry name" value="MnmG_C_subdom_sf"/>
</dbReference>
<dbReference type="InterPro" id="IPR040131">
    <property type="entry name" value="MnmG_N"/>
</dbReference>
<dbReference type="NCBIfam" id="TIGR00136">
    <property type="entry name" value="mnmG_gidA"/>
    <property type="match status" value="1"/>
</dbReference>
<dbReference type="PANTHER" id="PTHR11806">
    <property type="entry name" value="GLUCOSE INHIBITED DIVISION PROTEIN A"/>
    <property type="match status" value="1"/>
</dbReference>
<dbReference type="PANTHER" id="PTHR11806:SF0">
    <property type="entry name" value="PROTEIN MTO1 HOMOLOG, MITOCHONDRIAL"/>
    <property type="match status" value="1"/>
</dbReference>
<dbReference type="Pfam" id="PF01134">
    <property type="entry name" value="GIDA"/>
    <property type="match status" value="1"/>
</dbReference>
<dbReference type="Pfam" id="PF21680">
    <property type="entry name" value="GIDA_C_1st"/>
    <property type="match status" value="1"/>
</dbReference>
<dbReference type="Pfam" id="PF13932">
    <property type="entry name" value="SAM_GIDA_C"/>
    <property type="match status" value="1"/>
</dbReference>
<dbReference type="SMART" id="SM01228">
    <property type="entry name" value="GIDA_assoc_3"/>
    <property type="match status" value="1"/>
</dbReference>
<dbReference type="SUPFAM" id="SSF51905">
    <property type="entry name" value="FAD/NAD(P)-binding domain"/>
    <property type="match status" value="1"/>
</dbReference>
<dbReference type="PROSITE" id="PS01280">
    <property type="entry name" value="GIDA_1"/>
    <property type="match status" value="1"/>
</dbReference>
<dbReference type="PROSITE" id="PS01281">
    <property type="entry name" value="GIDA_2"/>
    <property type="match status" value="1"/>
</dbReference>
<protein>
    <recommendedName>
        <fullName evidence="1">tRNA uridine 5-carboxymethylaminomethyl modification enzyme MnmG</fullName>
    </recommendedName>
    <alternativeName>
        <fullName evidence="1">Glucose-inhibited division protein A</fullName>
    </alternativeName>
</protein>
<reference key="1">
    <citation type="journal article" date="2000" name="Nature">
        <title>DNA sequence of both chromosomes of the cholera pathogen Vibrio cholerae.</title>
        <authorList>
            <person name="Heidelberg J.F."/>
            <person name="Eisen J.A."/>
            <person name="Nelson W.C."/>
            <person name="Clayton R.A."/>
            <person name="Gwinn M.L."/>
            <person name="Dodson R.J."/>
            <person name="Haft D.H."/>
            <person name="Hickey E.K."/>
            <person name="Peterson J.D."/>
            <person name="Umayam L.A."/>
            <person name="Gill S.R."/>
            <person name="Nelson K.E."/>
            <person name="Read T.D."/>
            <person name="Tettelin H."/>
            <person name="Richardson D.L."/>
            <person name="Ermolaeva M.D."/>
            <person name="Vamathevan J.J."/>
            <person name="Bass S."/>
            <person name="Qin H."/>
            <person name="Dragoi I."/>
            <person name="Sellers P."/>
            <person name="McDonald L.A."/>
            <person name="Utterback T.R."/>
            <person name="Fleischmann R.D."/>
            <person name="Nierman W.C."/>
            <person name="White O."/>
            <person name="Salzberg S.L."/>
            <person name="Smith H.O."/>
            <person name="Colwell R.R."/>
            <person name="Mekalanos J.J."/>
            <person name="Venter J.C."/>
            <person name="Fraser C.M."/>
        </authorList>
    </citation>
    <scope>NUCLEOTIDE SEQUENCE [LARGE SCALE GENOMIC DNA]</scope>
    <source>
        <strain>ATCC 39315 / El Tor Inaba N16961</strain>
    </source>
</reference>
<evidence type="ECO:0000255" key="1">
    <source>
        <dbReference type="HAMAP-Rule" id="MF_00129"/>
    </source>
</evidence>
<comment type="function">
    <text evidence="1">NAD-binding protein involved in the addition of a carboxymethylaminomethyl (cmnm) group at the wobble position (U34) of certain tRNAs, forming tRNA-cmnm(5)s(2)U34.</text>
</comment>
<comment type="cofactor">
    <cofactor evidence="1">
        <name>FAD</name>
        <dbReference type="ChEBI" id="CHEBI:57692"/>
    </cofactor>
</comment>
<comment type="subunit">
    <text evidence="1">Homodimer. Heterotetramer of two MnmE and two MnmG subunits.</text>
</comment>
<comment type="subcellular location">
    <subcellularLocation>
        <location evidence="1">Cytoplasm</location>
    </subcellularLocation>
</comment>
<comment type="similarity">
    <text evidence="1">Belongs to the MnmG family.</text>
</comment>
<keyword id="KW-0963">Cytoplasm</keyword>
<keyword id="KW-0274">FAD</keyword>
<keyword id="KW-0285">Flavoprotein</keyword>
<keyword id="KW-0520">NAD</keyword>
<keyword id="KW-1185">Reference proteome</keyword>
<keyword id="KW-0819">tRNA processing</keyword>
<name>MNMG_VIBCH</name>
<accession>Q9KNG4</accession>
<sequence length="631" mass="70172">MLYHETFDVIVVGGGHAGTEAALAAARTGQRTLLLTHNIDTLGQMSCNPAIGGIGKGHLVKEVDAMGGLMAQAIDHAGIQFRTLNASKGPAVRATRAQADRALYKAYVRNVLENTPNLTLFQQAVDDVIVEHDHIRGVVTQMGLKFHAKAVVLTVGTFLGGKIHIGLENYAGGRAGDPPSIALAHRLRELPFRVDRLKTGTPPRIDANSVDFSVLEAQHGDNPTPVFSFMGKREHHPRQIPCYITHTNERTHDVIRANLDRSPMYAGIIEGIGPRYCPSIEDKVMRFADKDSHQIFIEPEGLTTTELYPNGISTSLPFDVQVQIVRSMKGFENAHIVRPGYAIEYDFFDPRDLKQTYETKYIHGLFFAGQINGTTGYEEAAAQGLMAGLNASLYSQDKEGWSPRRDQAYMGVLIDDLSTMGTKEPYRMFTSRAEYRLLLREDNADLRLTEKARELGLVDDARWARFNQKIDNMAKERQRLQETWMNPNSVGVEQLNTLLKTPMSREASGEDLLRRPEMTYELLTTLPAFAPALEDAEAAEQVEIQVKYDGYIQRQQDEIEKSLRHEHTKLPAELDYKQVKGLSNEVVLKLNAAKPETIGIASRISGITPAAISILLVHLKKHGMLKKGEAA</sequence>
<proteinExistence type="inferred from homology"/>
<gene>
    <name evidence="1" type="primary">mnmG</name>
    <name evidence="1" type="synonym">gidA</name>
    <name type="ordered locus">VC_2775</name>
</gene>
<organism>
    <name type="scientific">Vibrio cholerae serotype O1 (strain ATCC 39315 / El Tor Inaba N16961)</name>
    <dbReference type="NCBI Taxonomy" id="243277"/>
    <lineage>
        <taxon>Bacteria</taxon>
        <taxon>Pseudomonadati</taxon>
        <taxon>Pseudomonadota</taxon>
        <taxon>Gammaproteobacteria</taxon>
        <taxon>Vibrionales</taxon>
        <taxon>Vibrionaceae</taxon>
        <taxon>Vibrio</taxon>
    </lineage>
</organism>